<name>PAND_MYCPA</name>
<keyword id="KW-0068">Autocatalytic cleavage</keyword>
<keyword id="KW-0963">Cytoplasm</keyword>
<keyword id="KW-0210">Decarboxylase</keyword>
<keyword id="KW-0456">Lyase</keyword>
<keyword id="KW-0566">Pantothenate biosynthesis</keyword>
<keyword id="KW-0670">Pyruvate</keyword>
<keyword id="KW-1185">Reference proteome</keyword>
<keyword id="KW-0704">Schiff base</keyword>
<keyword id="KW-0865">Zymogen</keyword>
<accession>Q743Y4</accession>
<feature type="chain" id="PRO_0000023119" description="Aspartate 1-decarboxylase beta chain" evidence="1">
    <location>
        <begin position="1"/>
        <end position="24"/>
    </location>
</feature>
<feature type="chain" id="PRO_0000023120" description="Aspartate 1-decarboxylase alpha chain" evidence="1">
    <location>
        <begin position="25"/>
        <end position="143"/>
    </location>
</feature>
<feature type="active site" description="Schiff-base intermediate with substrate; via pyruvic acid" evidence="1">
    <location>
        <position position="25"/>
    </location>
</feature>
<feature type="active site" description="Proton donor" evidence="1">
    <location>
        <position position="58"/>
    </location>
</feature>
<feature type="binding site" evidence="1">
    <location>
        <position position="57"/>
    </location>
    <ligand>
        <name>substrate</name>
    </ligand>
</feature>
<feature type="binding site" evidence="1">
    <location>
        <begin position="73"/>
        <end position="75"/>
    </location>
    <ligand>
        <name>substrate</name>
    </ligand>
</feature>
<feature type="modified residue" description="Pyruvic acid (Ser)" evidence="1">
    <location>
        <position position="25"/>
    </location>
</feature>
<sequence length="143" mass="15303">MLRTMLKSKIHRATVTQADLHYVGSVTIDADLMDAADLLEGEQVTIVDIDNGARLVTYAITGERGSGVIGINGAAAHLVHPGDLVILIAYGTMEEAEARAYQPRIVFVDADNKPVDLGHDPAFVPDFEIAGAAELLDPRIVAR</sequence>
<protein>
    <recommendedName>
        <fullName evidence="1">Aspartate 1-decarboxylase</fullName>
        <ecNumber evidence="1">4.1.1.11</ecNumber>
    </recommendedName>
    <alternativeName>
        <fullName evidence="1">Aspartate alpha-decarboxylase</fullName>
    </alternativeName>
    <component>
        <recommendedName>
            <fullName evidence="1">Aspartate 1-decarboxylase beta chain</fullName>
        </recommendedName>
    </component>
    <component>
        <recommendedName>
            <fullName evidence="1">Aspartate 1-decarboxylase alpha chain</fullName>
        </recommendedName>
    </component>
</protein>
<comment type="function">
    <text evidence="1">Catalyzes the pyruvoyl-dependent decarboxylation of aspartate to produce beta-alanine.</text>
</comment>
<comment type="catalytic activity">
    <reaction evidence="1">
        <text>L-aspartate + H(+) = beta-alanine + CO2</text>
        <dbReference type="Rhea" id="RHEA:19497"/>
        <dbReference type="ChEBI" id="CHEBI:15378"/>
        <dbReference type="ChEBI" id="CHEBI:16526"/>
        <dbReference type="ChEBI" id="CHEBI:29991"/>
        <dbReference type="ChEBI" id="CHEBI:57966"/>
        <dbReference type="EC" id="4.1.1.11"/>
    </reaction>
</comment>
<comment type="cofactor">
    <cofactor evidence="1">
        <name>pyruvate</name>
        <dbReference type="ChEBI" id="CHEBI:15361"/>
    </cofactor>
    <text evidence="1">Binds 1 pyruvoyl group covalently per subunit.</text>
</comment>
<comment type="pathway">
    <text evidence="1">Cofactor biosynthesis; (R)-pantothenate biosynthesis; beta-alanine from L-aspartate: step 1/1.</text>
</comment>
<comment type="subunit">
    <text evidence="1">Heterooctamer of four alpha and four beta subunits.</text>
</comment>
<comment type="subcellular location">
    <subcellularLocation>
        <location evidence="1">Cytoplasm</location>
    </subcellularLocation>
</comment>
<comment type="PTM">
    <text evidence="1">Is synthesized initially as an inactive proenzyme, which is activated by self-cleavage at a specific serine bond to produce a beta-subunit with a hydroxyl group at its C-terminus and an alpha-subunit with a pyruvoyl group at its N-terminus.</text>
</comment>
<comment type="similarity">
    <text evidence="1">Belongs to the PanD family.</text>
</comment>
<dbReference type="EC" id="4.1.1.11" evidence="1"/>
<dbReference type="EMBL" id="AE016958">
    <property type="protein sequence ID" value="AAS02774.1"/>
    <property type="molecule type" value="Genomic_DNA"/>
</dbReference>
<dbReference type="RefSeq" id="WP_003875613.1">
    <property type="nucleotide sequence ID" value="NZ_CP106873.1"/>
</dbReference>
<dbReference type="SMR" id="Q743Y4"/>
<dbReference type="STRING" id="262316.MAP_0457"/>
<dbReference type="GeneID" id="75268404"/>
<dbReference type="KEGG" id="mpa:MAP_0457"/>
<dbReference type="eggNOG" id="COG0853">
    <property type="taxonomic scope" value="Bacteria"/>
</dbReference>
<dbReference type="HOGENOM" id="CLU_115305_2_0_11"/>
<dbReference type="UniPathway" id="UPA00028">
    <property type="reaction ID" value="UER00002"/>
</dbReference>
<dbReference type="Proteomes" id="UP000000580">
    <property type="component" value="Chromosome"/>
</dbReference>
<dbReference type="GO" id="GO:0005829">
    <property type="term" value="C:cytosol"/>
    <property type="evidence" value="ECO:0007669"/>
    <property type="project" value="TreeGrafter"/>
</dbReference>
<dbReference type="GO" id="GO:0004068">
    <property type="term" value="F:aspartate 1-decarboxylase activity"/>
    <property type="evidence" value="ECO:0007669"/>
    <property type="project" value="UniProtKB-UniRule"/>
</dbReference>
<dbReference type="GO" id="GO:0006523">
    <property type="term" value="P:alanine biosynthetic process"/>
    <property type="evidence" value="ECO:0007669"/>
    <property type="project" value="InterPro"/>
</dbReference>
<dbReference type="GO" id="GO:0015940">
    <property type="term" value="P:pantothenate biosynthetic process"/>
    <property type="evidence" value="ECO:0007669"/>
    <property type="project" value="UniProtKB-UniRule"/>
</dbReference>
<dbReference type="CDD" id="cd06919">
    <property type="entry name" value="Asp_decarbox"/>
    <property type="match status" value="1"/>
</dbReference>
<dbReference type="Gene3D" id="2.40.40.20">
    <property type="match status" value="1"/>
</dbReference>
<dbReference type="HAMAP" id="MF_00446">
    <property type="entry name" value="PanD"/>
    <property type="match status" value="1"/>
</dbReference>
<dbReference type="InterPro" id="IPR009010">
    <property type="entry name" value="Asp_de-COase-like_dom_sf"/>
</dbReference>
<dbReference type="InterPro" id="IPR003190">
    <property type="entry name" value="Asp_decarbox"/>
</dbReference>
<dbReference type="NCBIfam" id="TIGR00223">
    <property type="entry name" value="panD"/>
    <property type="match status" value="1"/>
</dbReference>
<dbReference type="PANTHER" id="PTHR21012">
    <property type="entry name" value="ASPARTATE 1-DECARBOXYLASE"/>
    <property type="match status" value="1"/>
</dbReference>
<dbReference type="PANTHER" id="PTHR21012:SF0">
    <property type="entry name" value="ASPARTATE 1-DECARBOXYLASE"/>
    <property type="match status" value="1"/>
</dbReference>
<dbReference type="Pfam" id="PF02261">
    <property type="entry name" value="Asp_decarbox"/>
    <property type="match status" value="1"/>
</dbReference>
<dbReference type="PIRSF" id="PIRSF006246">
    <property type="entry name" value="Asp_decarbox"/>
    <property type="match status" value="1"/>
</dbReference>
<dbReference type="SUPFAM" id="SSF50692">
    <property type="entry name" value="ADC-like"/>
    <property type="match status" value="1"/>
</dbReference>
<evidence type="ECO:0000255" key="1">
    <source>
        <dbReference type="HAMAP-Rule" id="MF_00446"/>
    </source>
</evidence>
<gene>
    <name evidence="1" type="primary">panD</name>
    <name type="ordered locus">MAP_0457</name>
</gene>
<proteinExistence type="inferred from homology"/>
<reference key="1">
    <citation type="journal article" date="2005" name="Proc. Natl. Acad. Sci. U.S.A.">
        <title>The complete genome sequence of Mycobacterium avium subspecies paratuberculosis.</title>
        <authorList>
            <person name="Li L."/>
            <person name="Bannantine J.P."/>
            <person name="Zhang Q."/>
            <person name="Amonsin A."/>
            <person name="May B.J."/>
            <person name="Alt D."/>
            <person name="Banerji N."/>
            <person name="Kanjilal S."/>
            <person name="Kapur V."/>
        </authorList>
    </citation>
    <scope>NUCLEOTIDE SEQUENCE [LARGE SCALE GENOMIC DNA]</scope>
    <source>
        <strain>ATCC BAA-968 / K-10</strain>
    </source>
</reference>
<organism>
    <name type="scientific">Mycolicibacterium paratuberculosis (strain ATCC BAA-968 / K-10)</name>
    <name type="common">Mycobacterium paratuberculosis</name>
    <dbReference type="NCBI Taxonomy" id="262316"/>
    <lineage>
        <taxon>Bacteria</taxon>
        <taxon>Bacillati</taxon>
        <taxon>Actinomycetota</taxon>
        <taxon>Actinomycetes</taxon>
        <taxon>Mycobacteriales</taxon>
        <taxon>Mycobacteriaceae</taxon>
        <taxon>Mycobacterium</taxon>
        <taxon>Mycobacterium avium complex (MAC)</taxon>
    </lineage>
</organism>